<proteinExistence type="evidence at protein level"/>
<comment type="mass spectrometry" mass="14319.0" method="MALDI" evidence="2"/>
<protein>
    <recommendedName>
        <fullName>Cuticle protein 14 isoform a</fullName>
    </recommendedName>
    <alternativeName>
        <fullName>LpCP14a</fullName>
    </alternativeName>
</protein>
<evidence type="ECO:0000255" key="1">
    <source>
        <dbReference type="PROSITE-ProRule" id="PRU00497"/>
    </source>
</evidence>
<evidence type="ECO:0000269" key="2">
    <source>
    </source>
</evidence>
<evidence type="ECO:0000305" key="3"/>
<dbReference type="OrthoDB" id="8021718at2759"/>
<dbReference type="Proteomes" id="UP000694941">
    <property type="component" value="Unplaced"/>
</dbReference>
<dbReference type="GO" id="GO:0062129">
    <property type="term" value="C:chitin-based extracellular matrix"/>
    <property type="evidence" value="ECO:0007669"/>
    <property type="project" value="TreeGrafter"/>
</dbReference>
<dbReference type="GO" id="GO:0008010">
    <property type="term" value="F:structural constituent of chitin-based larval cuticle"/>
    <property type="evidence" value="ECO:0007669"/>
    <property type="project" value="TreeGrafter"/>
</dbReference>
<dbReference type="InterPro" id="IPR031311">
    <property type="entry name" value="CHIT_BIND_RR_consensus"/>
</dbReference>
<dbReference type="InterPro" id="IPR050468">
    <property type="entry name" value="Cuticle_Struct_Prot"/>
</dbReference>
<dbReference type="InterPro" id="IPR000618">
    <property type="entry name" value="Insect_cuticle"/>
</dbReference>
<dbReference type="PANTHER" id="PTHR10380">
    <property type="entry name" value="CUTICLE PROTEIN"/>
    <property type="match status" value="1"/>
</dbReference>
<dbReference type="PANTHER" id="PTHR10380:SF173">
    <property type="entry name" value="CUTICULAR PROTEIN 47EF, ISOFORM C-RELATED"/>
    <property type="match status" value="1"/>
</dbReference>
<dbReference type="Pfam" id="PF00379">
    <property type="entry name" value="Chitin_bind_4"/>
    <property type="match status" value="1"/>
</dbReference>
<dbReference type="PRINTS" id="PR00947">
    <property type="entry name" value="CUTICLE"/>
</dbReference>
<dbReference type="PROSITE" id="PS00233">
    <property type="entry name" value="CHIT_BIND_RR_1"/>
    <property type="match status" value="1"/>
</dbReference>
<dbReference type="PROSITE" id="PS51155">
    <property type="entry name" value="CHIT_BIND_RR_2"/>
    <property type="match status" value="1"/>
</dbReference>
<name>CU14A_LIMPO</name>
<organism evidence="3">
    <name type="scientific">Limulus polyphemus</name>
    <name type="common">Atlantic horseshoe crab</name>
    <dbReference type="NCBI Taxonomy" id="6850"/>
    <lineage>
        <taxon>Eukaryota</taxon>
        <taxon>Metazoa</taxon>
        <taxon>Ecdysozoa</taxon>
        <taxon>Arthropoda</taxon>
        <taxon>Chelicerata</taxon>
        <taxon>Merostomata</taxon>
        <taxon>Xiphosura</taxon>
        <taxon>Limulidae</taxon>
        <taxon>Limulus</taxon>
    </lineage>
</organism>
<reference key="1">
    <citation type="journal article" date="2003" name="Comp. Biochem. Physiol.">
        <title>Cuticular proteins from the horseshoe crab, Limulus polyphemus.</title>
        <authorList>
            <person name="Ditzel N."/>
            <person name="Andersen S.O."/>
            <person name="Hoejrup P."/>
        </authorList>
    </citation>
    <scope>PROTEIN SEQUENCE</scope>
    <scope>MASS SPECTROMETRY</scope>
    <source>
        <tissue>Carapace cuticle</tissue>
    </source>
</reference>
<feature type="chain" id="PRO_0000196178" description="Cuticle protein 14 isoform a">
    <location>
        <begin position="1"/>
        <end position="130"/>
    </location>
</feature>
<feature type="domain" description="Chitin-binding type R&amp;R" evidence="1">
    <location>
        <begin position="24"/>
        <end position="90"/>
    </location>
</feature>
<accession>P83354</accession>
<keyword id="KW-0193">Cuticle</keyword>
<keyword id="KW-0903">Direct protein sequencing</keyword>
<sequence length="130" mass="14319">GYLYHPAYYYGAGASTQFKNQDAIGNYNFGYNEGHATGGTFRREFGDALGNVKVGSYGLTDADGRRRVVTYKADASGFNANVHTNEPGTDSSKDPANTLVNKAVLPTTYYGGYYPGHYYGHYAPYHYGYY</sequence>